<proteinExistence type="evidence at protein level"/>
<reference key="1">
    <citation type="journal article" date="1998" name="Nature">
        <title>Deciphering the biology of Mycobacterium tuberculosis from the complete genome sequence.</title>
        <authorList>
            <person name="Cole S.T."/>
            <person name="Brosch R."/>
            <person name="Parkhill J."/>
            <person name="Garnier T."/>
            <person name="Churcher C.M."/>
            <person name="Harris D.E."/>
            <person name="Gordon S.V."/>
            <person name="Eiglmeier K."/>
            <person name="Gas S."/>
            <person name="Barry C.E. III"/>
            <person name="Tekaia F."/>
            <person name="Badcock K."/>
            <person name="Basham D."/>
            <person name="Brown D."/>
            <person name="Chillingworth T."/>
            <person name="Connor R."/>
            <person name="Davies R.M."/>
            <person name="Devlin K."/>
            <person name="Feltwell T."/>
            <person name="Gentles S."/>
            <person name="Hamlin N."/>
            <person name="Holroyd S."/>
            <person name="Hornsby T."/>
            <person name="Jagels K."/>
            <person name="Krogh A."/>
            <person name="McLean J."/>
            <person name="Moule S."/>
            <person name="Murphy L.D."/>
            <person name="Oliver S."/>
            <person name="Osborne J."/>
            <person name="Quail M.A."/>
            <person name="Rajandream M.A."/>
            <person name="Rogers J."/>
            <person name="Rutter S."/>
            <person name="Seeger K."/>
            <person name="Skelton S."/>
            <person name="Squares S."/>
            <person name="Squares R."/>
            <person name="Sulston J.E."/>
            <person name="Taylor K."/>
            <person name="Whitehead S."/>
            <person name="Barrell B.G."/>
        </authorList>
    </citation>
    <scope>NUCLEOTIDE SEQUENCE [LARGE SCALE GENOMIC DNA]</scope>
    <source>
        <strain>ATCC 25618 / H37Rv</strain>
    </source>
</reference>
<reference key="2">
    <citation type="journal article" date="2011" name="Mol. Cell. Proteomics">
        <title>Proteogenomic analysis of Mycobacterium tuberculosis by high resolution mass spectrometry.</title>
        <authorList>
            <person name="Kelkar D.S."/>
            <person name="Kumar D."/>
            <person name="Kumar P."/>
            <person name="Balakrishnan L."/>
            <person name="Muthusamy B."/>
            <person name="Yadav A.K."/>
            <person name="Shrivastava P."/>
            <person name="Marimuthu A."/>
            <person name="Anand S."/>
            <person name="Sundaram H."/>
            <person name="Kingsbury R."/>
            <person name="Harsha H.C."/>
            <person name="Nair B."/>
            <person name="Prasad T.S."/>
            <person name="Chauhan D.S."/>
            <person name="Katoch K."/>
            <person name="Katoch V.M."/>
            <person name="Kumar P."/>
            <person name="Chaerkady R."/>
            <person name="Ramachandran S."/>
            <person name="Dash D."/>
            <person name="Pandey A."/>
        </authorList>
    </citation>
    <scope>IDENTIFICATION BY MASS SPECTROMETRY [LARGE SCALE ANALYSIS]</scope>
    <source>
        <strain>ATCC 25618 / H37Rv</strain>
    </source>
</reference>
<accession>P9WJI1</accession>
<accession>L0T6Q5</accession>
<accession>P65528</accession>
<accession>Q10547</accession>
<feature type="chain" id="PRO_0000167676" description="Probable ferredoxin/ferredoxin--NADP reductase">
    <location>
        <begin position="1"/>
        <end position="575"/>
    </location>
</feature>
<feature type="domain" description="4Fe-4S ferredoxin-type 1" evidence="2">
    <location>
        <begin position="2"/>
        <end position="29"/>
    </location>
</feature>
<feature type="domain" description="4Fe-4S ferredoxin-type 2" evidence="2">
    <location>
        <begin position="37"/>
        <end position="66"/>
    </location>
</feature>
<feature type="region of interest" description="Ferredoxin--NADP reductase">
    <location>
        <begin position="115"/>
        <end position="575"/>
    </location>
</feature>
<feature type="binding site" evidence="1">
    <location>
        <position position="9"/>
    </location>
    <ligand>
        <name>[4Fe-4S] cluster</name>
        <dbReference type="ChEBI" id="CHEBI:49883"/>
        <label>1</label>
    </ligand>
</feature>
<feature type="binding site" evidence="1">
    <location>
        <position position="15"/>
    </location>
    <ligand>
        <name>[4Fe-4S] cluster</name>
        <dbReference type="ChEBI" id="CHEBI:49883"/>
        <label>1</label>
    </ligand>
</feature>
<feature type="binding site" evidence="1">
    <location>
        <position position="19"/>
    </location>
    <ligand>
        <name>[4Fe-4S] cluster</name>
        <dbReference type="ChEBI" id="CHEBI:49883"/>
        <label>1</label>
    </ligand>
</feature>
<feature type="binding site" evidence="2">
    <location>
        <position position="46"/>
    </location>
    <ligand>
        <name>[4Fe-4S] cluster</name>
        <dbReference type="ChEBI" id="CHEBI:49883"/>
        <label>2</label>
    </ligand>
</feature>
<feature type="binding site" evidence="2">
    <location>
        <position position="49"/>
    </location>
    <ligand>
        <name>[4Fe-4S] cluster</name>
        <dbReference type="ChEBI" id="CHEBI:49883"/>
        <label>2</label>
    </ligand>
</feature>
<feature type="binding site" evidence="2">
    <location>
        <position position="52"/>
    </location>
    <ligand>
        <name>[4Fe-4S] cluster</name>
        <dbReference type="ChEBI" id="CHEBI:49883"/>
        <label>2</label>
    </ligand>
</feature>
<feature type="binding site" evidence="2">
    <location>
        <position position="56"/>
    </location>
    <ligand>
        <name>[4Fe-4S] cluster</name>
        <dbReference type="ChEBI" id="CHEBI:49883"/>
        <label>2</label>
    </ligand>
</feature>
<feature type="binding site" evidence="1">
    <location>
        <position position="123"/>
    </location>
    <ligand>
        <name>FAD</name>
        <dbReference type="ChEBI" id="CHEBI:57692"/>
    </ligand>
</feature>
<feature type="binding site" evidence="1">
    <location>
        <position position="143"/>
    </location>
    <ligand>
        <name>FAD</name>
        <dbReference type="ChEBI" id="CHEBI:57692"/>
    </ligand>
</feature>
<feature type="binding site" evidence="1">
    <location>
        <position position="151"/>
    </location>
    <ligand>
        <name>FAD</name>
        <dbReference type="ChEBI" id="CHEBI:57692"/>
    </ligand>
</feature>
<feature type="binding site" evidence="1">
    <location>
        <position position="187"/>
    </location>
    <ligand>
        <name>FAD</name>
        <dbReference type="ChEBI" id="CHEBI:57692"/>
    </ligand>
</feature>
<feature type="binding site" evidence="1">
    <location>
        <position position="213"/>
    </location>
    <ligand>
        <name>NADP(+)</name>
        <dbReference type="ChEBI" id="CHEBI:58349"/>
    </ligand>
</feature>
<feature type="binding site" evidence="1">
    <location>
        <begin position="258"/>
        <end position="261"/>
    </location>
    <ligand>
        <name>NADP(+)</name>
        <dbReference type="ChEBI" id="CHEBI:58349"/>
    </ligand>
</feature>
<feature type="binding site" evidence="1">
    <location>
        <begin position="302"/>
        <end position="303"/>
    </location>
    <ligand>
        <name>NADP(+)</name>
        <dbReference type="ChEBI" id="CHEBI:58349"/>
    </ligand>
</feature>
<feature type="binding site" evidence="1">
    <location>
        <position position="314"/>
    </location>
    <ligand>
        <name>NADP(+)</name>
        <dbReference type="ChEBI" id="CHEBI:58349"/>
    </ligand>
</feature>
<feature type="binding site" evidence="1">
    <location>
        <position position="456"/>
    </location>
    <ligand>
        <name>FAD</name>
        <dbReference type="ChEBI" id="CHEBI:57692"/>
    </ligand>
</feature>
<feature type="binding site" evidence="1">
    <location>
        <begin position="463"/>
        <end position="465"/>
    </location>
    <ligand>
        <name>FAD</name>
        <dbReference type="ChEBI" id="CHEBI:57692"/>
    </ligand>
</feature>
<feature type="binding site" evidence="1">
    <location>
        <position position="463"/>
    </location>
    <ligand>
        <name>NADP(+)</name>
        <dbReference type="ChEBI" id="CHEBI:58349"/>
    </ligand>
</feature>
<evidence type="ECO:0000250" key="1"/>
<evidence type="ECO:0000255" key="2">
    <source>
        <dbReference type="PROSITE-ProRule" id="PRU00711"/>
    </source>
</evidence>
<evidence type="ECO:0000305" key="3"/>
<organism>
    <name type="scientific">Mycobacterium tuberculosis (strain ATCC 25618 / H37Rv)</name>
    <dbReference type="NCBI Taxonomy" id="83332"/>
    <lineage>
        <taxon>Bacteria</taxon>
        <taxon>Bacillati</taxon>
        <taxon>Actinomycetota</taxon>
        <taxon>Actinomycetes</taxon>
        <taxon>Mycobacteriales</taxon>
        <taxon>Mycobacteriaceae</taxon>
        <taxon>Mycobacterium</taxon>
        <taxon>Mycobacterium tuberculosis complex</taxon>
    </lineage>
</organism>
<name>FPRB_MYCTU</name>
<dbReference type="EC" id="1.18.1.2"/>
<dbReference type="EMBL" id="AL123456">
    <property type="protein sequence ID" value="CCP43634.1"/>
    <property type="molecule type" value="Genomic_DNA"/>
</dbReference>
<dbReference type="PIR" id="C70781">
    <property type="entry name" value="C70781"/>
</dbReference>
<dbReference type="RefSeq" id="NP_215401.1">
    <property type="nucleotide sequence ID" value="NC_000962.3"/>
</dbReference>
<dbReference type="RefSeq" id="WP_003404631.1">
    <property type="nucleotide sequence ID" value="NZ_NVQJ01000001.1"/>
</dbReference>
<dbReference type="SMR" id="P9WJI1"/>
<dbReference type="FunCoup" id="P9WJI1">
    <property type="interactions" value="100"/>
</dbReference>
<dbReference type="STRING" id="83332.Rv0886"/>
<dbReference type="PaxDb" id="83332-Rv0886"/>
<dbReference type="DNASU" id="885195"/>
<dbReference type="GeneID" id="885195"/>
<dbReference type="KEGG" id="mtu:Rv0886"/>
<dbReference type="KEGG" id="mtv:RVBD_0886"/>
<dbReference type="TubercuList" id="Rv0886"/>
<dbReference type="eggNOG" id="COG0493">
    <property type="taxonomic scope" value="Bacteria"/>
</dbReference>
<dbReference type="InParanoid" id="P9WJI1"/>
<dbReference type="OrthoDB" id="289202at2"/>
<dbReference type="PhylomeDB" id="P9WJI1"/>
<dbReference type="Proteomes" id="UP000001584">
    <property type="component" value="Chromosome"/>
</dbReference>
<dbReference type="GO" id="GO:0005886">
    <property type="term" value="C:plasma membrane"/>
    <property type="evidence" value="ECO:0007005"/>
    <property type="project" value="MTBBASE"/>
</dbReference>
<dbReference type="GO" id="GO:0051539">
    <property type="term" value="F:4 iron, 4 sulfur cluster binding"/>
    <property type="evidence" value="ECO:0007669"/>
    <property type="project" value="UniProtKB-KW"/>
</dbReference>
<dbReference type="GO" id="GO:0004324">
    <property type="term" value="F:ferredoxin-NADP+ reductase activity"/>
    <property type="evidence" value="ECO:0007669"/>
    <property type="project" value="UniProtKB-EC"/>
</dbReference>
<dbReference type="GO" id="GO:0046872">
    <property type="term" value="F:metal ion binding"/>
    <property type="evidence" value="ECO:0007669"/>
    <property type="project" value="UniProtKB-KW"/>
</dbReference>
<dbReference type="GO" id="GO:0016491">
    <property type="term" value="F:oxidoreductase activity"/>
    <property type="evidence" value="ECO:0000318"/>
    <property type="project" value="GO_Central"/>
</dbReference>
<dbReference type="CDD" id="cd04410">
    <property type="entry name" value="DMSOR_beta-like"/>
    <property type="match status" value="1"/>
</dbReference>
<dbReference type="FunFam" id="3.50.50.60:FF:000229">
    <property type="entry name" value="NADPH:adrenodoxin oxidoreductase, mitochondrial"/>
    <property type="match status" value="1"/>
</dbReference>
<dbReference type="Gene3D" id="3.30.70.20">
    <property type="match status" value="1"/>
</dbReference>
<dbReference type="Gene3D" id="3.50.50.60">
    <property type="entry name" value="FAD/NAD(P)-binding domain"/>
    <property type="match status" value="1"/>
</dbReference>
<dbReference type="Gene3D" id="3.40.50.720">
    <property type="entry name" value="NAD(P)-binding Rossmann-like Domain"/>
    <property type="match status" value="1"/>
</dbReference>
<dbReference type="InterPro" id="IPR017896">
    <property type="entry name" value="4Fe4S_Fe-S-bd"/>
</dbReference>
<dbReference type="InterPro" id="IPR017900">
    <property type="entry name" value="4Fe4S_Fe_S_CS"/>
</dbReference>
<dbReference type="InterPro" id="IPR036188">
    <property type="entry name" value="FAD/NAD-bd_sf"/>
</dbReference>
<dbReference type="InterPro" id="IPR023753">
    <property type="entry name" value="FAD/NAD-binding_dom"/>
</dbReference>
<dbReference type="InterPro" id="IPR055275">
    <property type="entry name" value="Ferredox_Rdtase"/>
</dbReference>
<dbReference type="PANTHER" id="PTHR48467">
    <property type="entry name" value="GLUTAMATE SYNTHASE 1 [NADH], CHLOROPLASTIC-LIKE"/>
    <property type="match status" value="1"/>
</dbReference>
<dbReference type="PANTHER" id="PTHR48467:SF1">
    <property type="entry name" value="GLUTAMATE SYNTHASE 1 [NADH], CHLOROPLASTIC-LIKE"/>
    <property type="match status" value="1"/>
</dbReference>
<dbReference type="Pfam" id="PF00037">
    <property type="entry name" value="Fer4"/>
    <property type="match status" value="1"/>
</dbReference>
<dbReference type="Pfam" id="PF07992">
    <property type="entry name" value="Pyr_redox_2"/>
    <property type="match status" value="1"/>
</dbReference>
<dbReference type="PRINTS" id="PR00419">
    <property type="entry name" value="ADXRDTASE"/>
</dbReference>
<dbReference type="SUPFAM" id="SSF54862">
    <property type="entry name" value="4Fe-4S ferredoxins"/>
    <property type="match status" value="1"/>
</dbReference>
<dbReference type="SUPFAM" id="SSF51971">
    <property type="entry name" value="Nucleotide-binding domain"/>
    <property type="match status" value="1"/>
</dbReference>
<dbReference type="PROSITE" id="PS00198">
    <property type="entry name" value="4FE4S_FER_1"/>
    <property type="match status" value="1"/>
</dbReference>
<dbReference type="PROSITE" id="PS51379">
    <property type="entry name" value="4FE4S_FER_2"/>
    <property type="match status" value="2"/>
</dbReference>
<comment type="catalytic activity">
    <reaction>
        <text>2 reduced [2Fe-2S]-[ferredoxin] + NADP(+) + H(+) = 2 oxidized [2Fe-2S]-[ferredoxin] + NADPH</text>
        <dbReference type="Rhea" id="RHEA:20125"/>
        <dbReference type="Rhea" id="RHEA-COMP:10000"/>
        <dbReference type="Rhea" id="RHEA-COMP:10001"/>
        <dbReference type="ChEBI" id="CHEBI:15378"/>
        <dbReference type="ChEBI" id="CHEBI:33737"/>
        <dbReference type="ChEBI" id="CHEBI:33738"/>
        <dbReference type="ChEBI" id="CHEBI:57783"/>
        <dbReference type="ChEBI" id="CHEBI:58349"/>
        <dbReference type="EC" id="1.18.1.2"/>
    </reaction>
</comment>
<comment type="cofactor">
    <cofactor evidence="1">
        <name>[4Fe-4S] cluster</name>
        <dbReference type="ChEBI" id="CHEBI:49883"/>
    </cofactor>
    <text evidence="1">Binds 1 or 2 [4Fe-4S] clusters.</text>
</comment>
<comment type="cofactor">
    <cofactor evidence="1">
        <name>FAD</name>
        <dbReference type="ChEBI" id="CHEBI:57692"/>
    </cofactor>
</comment>
<comment type="similarity">
    <text evidence="3">In the C-terminal section; belongs to the ferredoxin--NADP reductase family.</text>
</comment>
<keyword id="KW-0004">4Fe-4S</keyword>
<keyword id="KW-0249">Electron transport</keyword>
<keyword id="KW-0274">FAD</keyword>
<keyword id="KW-0285">Flavoprotein</keyword>
<keyword id="KW-0408">Iron</keyword>
<keyword id="KW-0411">Iron-sulfur</keyword>
<keyword id="KW-0479">Metal-binding</keyword>
<keyword id="KW-0521">NADP</keyword>
<keyword id="KW-0560">Oxidoreductase</keyword>
<keyword id="KW-1185">Reference proteome</keyword>
<keyword id="KW-0677">Repeat</keyword>
<keyword id="KW-0813">Transport</keyword>
<protein>
    <recommendedName>
        <fullName>Probable ferredoxin/ferredoxin--NADP reductase</fullName>
        <shortName>FNR</shortName>
        <ecNumber>1.18.1.2</ecNumber>
    </recommendedName>
</protein>
<sequence length="575" mass="61337">MPHVITQSCCNDASCVFACPVNCIHPTPDEPGFATSEMLYIDPVACVDCGACVTACPVSAIAPNTRLDFEQLPFVEINASYYPKRPAGVKLAPTSKLAPVTPAAEVRVRRQPLTVAVVGSGPAAMYAADELLVQQGVQVNVFEKLPTPYGLVRSGVAPDHQNTKRVTRLFDRIAGHRRFRFYLNVEIGKHLGHAELLAHHHAVLYAVGAPDDRRLTIDGMGLPGTGTATELVAWLNGHPDFNDLPVDLSHERVVIIGNGNVALDVARVLAADPHELAATDIADHALSALRNSAVREVVVAARRGPAHSAFTLPELIGLTAGADVVLDPGDHQRVLDDLAIVADPLTRNKLEILSTLGDGSAPARRVGRPRIRLAYRLTPRRVLGQRRAGGVQFSVTGTDELRQLDAGLVLTSIGYRGKPIPDLPFDEQAALVPNDGGRVIDPGTGEPVPGAYVAGWIKRGPTGFIGTNKSCSMQTVQALVADFNDGRLTDPVATPTALDQLVQARQPQAIGCAGWRAIDAAEIARGSADGRVRNKFTDVAEMLAAATSAPKEPLRRRVLARLRDLGQPIVLTVPL</sequence>
<gene>
    <name type="primary">fprB</name>
    <name type="ordered locus">Rv0886</name>
    <name type="ORF">MTCY31.14</name>
</gene>